<gene>
    <name evidence="1" type="primary">pyrG</name>
    <name type="ordered locus">SACOL2119</name>
</gene>
<accession>Q5HE73</accession>
<keyword id="KW-0067">ATP-binding</keyword>
<keyword id="KW-0315">Glutamine amidotransferase</keyword>
<keyword id="KW-0436">Ligase</keyword>
<keyword id="KW-0460">Magnesium</keyword>
<keyword id="KW-0479">Metal-binding</keyword>
<keyword id="KW-0547">Nucleotide-binding</keyword>
<keyword id="KW-0665">Pyrimidine biosynthesis</keyword>
<feature type="chain" id="PRO_0000138222" description="CTP synthase">
    <location>
        <begin position="1"/>
        <end position="536"/>
    </location>
</feature>
<feature type="domain" description="Glutamine amidotransferase type-1" evidence="1">
    <location>
        <begin position="293"/>
        <end position="535"/>
    </location>
</feature>
<feature type="region of interest" description="Amidoligase domain" evidence="1">
    <location>
        <begin position="1"/>
        <end position="267"/>
    </location>
</feature>
<feature type="active site" description="Nucleophile; for glutamine hydrolysis" evidence="1">
    <location>
        <position position="382"/>
    </location>
</feature>
<feature type="active site" evidence="1">
    <location>
        <position position="508"/>
    </location>
</feature>
<feature type="active site" evidence="1">
    <location>
        <position position="510"/>
    </location>
</feature>
<feature type="binding site" evidence="1">
    <location>
        <position position="13"/>
    </location>
    <ligand>
        <name>CTP</name>
        <dbReference type="ChEBI" id="CHEBI:37563"/>
        <note>allosteric inhibitor</note>
    </ligand>
</feature>
<feature type="binding site" evidence="1">
    <location>
        <position position="13"/>
    </location>
    <ligand>
        <name>UTP</name>
        <dbReference type="ChEBI" id="CHEBI:46398"/>
    </ligand>
</feature>
<feature type="binding site" evidence="1">
    <location>
        <begin position="14"/>
        <end position="19"/>
    </location>
    <ligand>
        <name>ATP</name>
        <dbReference type="ChEBI" id="CHEBI:30616"/>
    </ligand>
</feature>
<feature type="binding site" evidence="1">
    <location>
        <position position="54"/>
    </location>
    <ligand>
        <name>L-glutamine</name>
        <dbReference type="ChEBI" id="CHEBI:58359"/>
    </ligand>
</feature>
<feature type="binding site" evidence="1">
    <location>
        <position position="71"/>
    </location>
    <ligand>
        <name>ATP</name>
        <dbReference type="ChEBI" id="CHEBI:30616"/>
    </ligand>
</feature>
<feature type="binding site" evidence="1">
    <location>
        <position position="71"/>
    </location>
    <ligand>
        <name>Mg(2+)</name>
        <dbReference type="ChEBI" id="CHEBI:18420"/>
    </ligand>
</feature>
<feature type="binding site" evidence="1">
    <location>
        <position position="141"/>
    </location>
    <ligand>
        <name>Mg(2+)</name>
        <dbReference type="ChEBI" id="CHEBI:18420"/>
    </ligand>
</feature>
<feature type="binding site" evidence="1">
    <location>
        <begin position="148"/>
        <end position="150"/>
    </location>
    <ligand>
        <name>CTP</name>
        <dbReference type="ChEBI" id="CHEBI:37563"/>
        <note>allosteric inhibitor</note>
    </ligand>
</feature>
<feature type="binding site" evidence="1">
    <location>
        <begin position="188"/>
        <end position="193"/>
    </location>
    <ligand>
        <name>CTP</name>
        <dbReference type="ChEBI" id="CHEBI:37563"/>
        <note>allosteric inhibitor</note>
    </ligand>
</feature>
<feature type="binding site" evidence="1">
    <location>
        <begin position="188"/>
        <end position="193"/>
    </location>
    <ligand>
        <name>UTP</name>
        <dbReference type="ChEBI" id="CHEBI:46398"/>
    </ligand>
</feature>
<feature type="binding site" evidence="1">
    <location>
        <position position="224"/>
    </location>
    <ligand>
        <name>CTP</name>
        <dbReference type="ChEBI" id="CHEBI:37563"/>
        <note>allosteric inhibitor</note>
    </ligand>
</feature>
<feature type="binding site" evidence="1">
    <location>
        <position position="224"/>
    </location>
    <ligand>
        <name>UTP</name>
        <dbReference type="ChEBI" id="CHEBI:46398"/>
    </ligand>
</feature>
<feature type="binding site" evidence="1">
    <location>
        <begin position="240"/>
        <end position="242"/>
    </location>
    <ligand>
        <name>ATP</name>
        <dbReference type="ChEBI" id="CHEBI:30616"/>
    </ligand>
</feature>
<feature type="binding site" evidence="1">
    <location>
        <position position="355"/>
    </location>
    <ligand>
        <name>L-glutamine</name>
        <dbReference type="ChEBI" id="CHEBI:58359"/>
    </ligand>
</feature>
<feature type="binding site" evidence="1">
    <location>
        <begin position="383"/>
        <end position="386"/>
    </location>
    <ligand>
        <name>L-glutamine</name>
        <dbReference type="ChEBI" id="CHEBI:58359"/>
    </ligand>
</feature>
<feature type="binding site" evidence="1">
    <location>
        <position position="406"/>
    </location>
    <ligand>
        <name>L-glutamine</name>
        <dbReference type="ChEBI" id="CHEBI:58359"/>
    </ligand>
</feature>
<feature type="binding site" evidence="1">
    <location>
        <position position="463"/>
    </location>
    <ligand>
        <name>L-glutamine</name>
        <dbReference type="ChEBI" id="CHEBI:58359"/>
    </ligand>
</feature>
<protein>
    <recommendedName>
        <fullName evidence="1">CTP synthase</fullName>
        <ecNumber evidence="1">6.3.4.2</ecNumber>
    </recommendedName>
    <alternativeName>
        <fullName evidence="1">Cytidine 5'-triphosphate synthase</fullName>
    </alternativeName>
    <alternativeName>
        <fullName evidence="1">Cytidine triphosphate synthetase</fullName>
        <shortName evidence="1">CTP synthetase</shortName>
        <shortName evidence="1">CTPS</shortName>
    </alternativeName>
    <alternativeName>
        <fullName evidence="1">UTP--ammonia ligase</fullName>
    </alternativeName>
</protein>
<dbReference type="EC" id="6.3.4.2" evidence="1"/>
<dbReference type="EMBL" id="CP000046">
    <property type="protein sequence ID" value="AAW38429.1"/>
    <property type="molecule type" value="Genomic_DNA"/>
</dbReference>
<dbReference type="RefSeq" id="WP_000159960.1">
    <property type="nucleotide sequence ID" value="NZ_JBGOFO010000007.1"/>
</dbReference>
<dbReference type="SMR" id="Q5HE73"/>
<dbReference type="KEGG" id="sac:SACOL2119"/>
<dbReference type="HOGENOM" id="CLU_011675_5_0_9"/>
<dbReference type="UniPathway" id="UPA00159">
    <property type="reaction ID" value="UER00277"/>
</dbReference>
<dbReference type="Proteomes" id="UP000000530">
    <property type="component" value="Chromosome"/>
</dbReference>
<dbReference type="GO" id="GO:0005829">
    <property type="term" value="C:cytosol"/>
    <property type="evidence" value="ECO:0007669"/>
    <property type="project" value="TreeGrafter"/>
</dbReference>
<dbReference type="GO" id="GO:0005524">
    <property type="term" value="F:ATP binding"/>
    <property type="evidence" value="ECO:0007669"/>
    <property type="project" value="UniProtKB-KW"/>
</dbReference>
<dbReference type="GO" id="GO:0003883">
    <property type="term" value="F:CTP synthase activity"/>
    <property type="evidence" value="ECO:0007669"/>
    <property type="project" value="UniProtKB-UniRule"/>
</dbReference>
<dbReference type="GO" id="GO:0004359">
    <property type="term" value="F:glutaminase activity"/>
    <property type="evidence" value="ECO:0007669"/>
    <property type="project" value="RHEA"/>
</dbReference>
<dbReference type="GO" id="GO:0042802">
    <property type="term" value="F:identical protein binding"/>
    <property type="evidence" value="ECO:0007669"/>
    <property type="project" value="TreeGrafter"/>
</dbReference>
<dbReference type="GO" id="GO:0046872">
    <property type="term" value="F:metal ion binding"/>
    <property type="evidence" value="ECO:0007669"/>
    <property type="project" value="UniProtKB-KW"/>
</dbReference>
<dbReference type="GO" id="GO:0044210">
    <property type="term" value="P:'de novo' CTP biosynthetic process"/>
    <property type="evidence" value="ECO:0007669"/>
    <property type="project" value="UniProtKB-UniRule"/>
</dbReference>
<dbReference type="GO" id="GO:0019856">
    <property type="term" value="P:pyrimidine nucleobase biosynthetic process"/>
    <property type="evidence" value="ECO:0007669"/>
    <property type="project" value="TreeGrafter"/>
</dbReference>
<dbReference type="CDD" id="cd03113">
    <property type="entry name" value="CTPS_N"/>
    <property type="match status" value="1"/>
</dbReference>
<dbReference type="CDD" id="cd01746">
    <property type="entry name" value="GATase1_CTP_Synthase"/>
    <property type="match status" value="1"/>
</dbReference>
<dbReference type="FunFam" id="3.40.50.300:FF:000009">
    <property type="entry name" value="CTP synthase"/>
    <property type="match status" value="1"/>
</dbReference>
<dbReference type="FunFam" id="3.40.50.880:FF:000002">
    <property type="entry name" value="CTP synthase"/>
    <property type="match status" value="1"/>
</dbReference>
<dbReference type="Gene3D" id="3.40.50.880">
    <property type="match status" value="1"/>
</dbReference>
<dbReference type="Gene3D" id="3.40.50.300">
    <property type="entry name" value="P-loop containing nucleotide triphosphate hydrolases"/>
    <property type="match status" value="1"/>
</dbReference>
<dbReference type="HAMAP" id="MF_01227">
    <property type="entry name" value="PyrG"/>
    <property type="match status" value="1"/>
</dbReference>
<dbReference type="InterPro" id="IPR029062">
    <property type="entry name" value="Class_I_gatase-like"/>
</dbReference>
<dbReference type="InterPro" id="IPR004468">
    <property type="entry name" value="CTP_synthase"/>
</dbReference>
<dbReference type="InterPro" id="IPR017456">
    <property type="entry name" value="CTP_synthase_N"/>
</dbReference>
<dbReference type="InterPro" id="IPR017926">
    <property type="entry name" value="GATASE"/>
</dbReference>
<dbReference type="InterPro" id="IPR033828">
    <property type="entry name" value="GATase1_CTP_Synthase"/>
</dbReference>
<dbReference type="InterPro" id="IPR027417">
    <property type="entry name" value="P-loop_NTPase"/>
</dbReference>
<dbReference type="NCBIfam" id="NF003792">
    <property type="entry name" value="PRK05380.1"/>
    <property type="match status" value="1"/>
</dbReference>
<dbReference type="NCBIfam" id="TIGR00337">
    <property type="entry name" value="PyrG"/>
    <property type="match status" value="1"/>
</dbReference>
<dbReference type="PANTHER" id="PTHR11550">
    <property type="entry name" value="CTP SYNTHASE"/>
    <property type="match status" value="1"/>
</dbReference>
<dbReference type="PANTHER" id="PTHR11550:SF0">
    <property type="entry name" value="CTP SYNTHASE-RELATED"/>
    <property type="match status" value="1"/>
</dbReference>
<dbReference type="Pfam" id="PF06418">
    <property type="entry name" value="CTP_synth_N"/>
    <property type="match status" value="1"/>
</dbReference>
<dbReference type="Pfam" id="PF00117">
    <property type="entry name" value="GATase"/>
    <property type="match status" value="1"/>
</dbReference>
<dbReference type="SUPFAM" id="SSF52317">
    <property type="entry name" value="Class I glutamine amidotransferase-like"/>
    <property type="match status" value="1"/>
</dbReference>
<dbReference type="SUPFAM" id="SSF52540">
    <property type="entry name" value="P-loop containing nucleoside triphosphate hydrolases"/>
    <property type="match status" value="1"/>
</dbReference>
<dbReference type="PROSITE" id="PS51273">
    <property type="entry name" value="GATASE_TYPE_1"/>
    <property type="match status" value="1"/>
</dbReference>
<name>PYRG_STAAC</name>
<reference key="1">
    <citation type="journal article" date="2005" name="J. Bacteriol.">
        <title>Insights on evolution of virulence and resistance from the complete genome analysis of an early methicillin-resistant Staphylococcus aureus strain and a biofilm-producing methicillin-resistant Staphylococcus epidermidis strain.</title>
        <authorList>
            <person name="Gill S.R."/>
            <person name="Fouts D.E."/>
            <person name="Archer G.L."/>
            <person name="Mongodin E.F."/>
            <person name="DeBoy R.T."/>
            <person name="Ravel J."/>
            <person name="Paulsen I.T."/>
            <person name="Kolonay J.F."/>
            <person name="Brinkac L.M."/>
            <person name="Beanan M.J."/>
            <person name="Dodson R.J."/>
            <person name="Daugherty S.C."/>
            <person name="Madupu R."/>
            <person name="Angiuoli S.V."/>
            <person name="Durkin A.S."/>
            <person name="Haft D.H."/>
            <person name="Vamathevan J.J."/>
            <person name="Khouri H."/>
            <person name="Utterback T.R."/>
            <person name="Lee C."/>
            <person name="Dimitrov G."/>
            <person name="Jiang L."/>
            <person name="Qin H."/>
            <person name="Weidman J."/>
            <person name="Tran K."/>
            <person name="Kang K.H."/>
            <person name="Hance I.R."/>
            <person name="Nelson K.E."/>
            <person name="Fraser C.M."/>
        </authorList>
    </citation>
    <scope>NUCLEOTIDE SEQUENCE [LARGE SCALE GENOMIC DNA]</scope>
    <source>
        <strain>COL</strain>
    </source>
</reference>
<comment type="function">
    <text evidence="1">Catalyzes the ATP-dependent amination of UTP to CTP with either L-glutamine or ammonia as the source of nitrogen. Regulates intracellular CTP levels through interactions with the four ribonucleotide triphosphates.</text>
</comment>
<comment type="catalytic activity">
    <reaction evidence="1">
        <text>UTP + L-glutamine + ATP + H2O = CTP + L-glutamate + ADP + phosphate + 2 H(+)</text>
        <dbReference type="Rhea" id="RHEA:26426"/>
        <dbReference type="ChEBI" id="CHEBI:15377"/>
        <dbReference type="ChEBI" id="CHEBI:15378"/>
        <dbReference type="ChEBI" id="CHEBI:29985"/>
        <dbReference type="ChEBI" id="CHEBI:30616"/>
        <dbReference type="ChEBI" id="CHEBI:37563"/>
        <dbReference type="ChEBI" id="CHEBI:43474"/>
        <dbReference type="ChEBI" id="CHEBI:46398"/>
        <dbReference type="ChEBI" id="CHEBI:58359"/>
        <dbReference type="ChEBI" id="CHEBI:456216"/>
        <dbReference type="EC" id="6.3.4.2"/>
    </reaction>
</comment>
<comment type="catalytic activity">
    <reaction evidence="1">
        <text>L-glutamine + H2O = L-glutamate + NH4(+)</text>
        <dbReference type="Rhea" id="RHEA:15889"/>
        <dbReference type="ChEBI" id="CHEBI:15377"/>
        <dbReference type="ChEBI" id="CHEBI:28938"/>
        <dbReference type="ChEBI" id="CHEBI:29985"/>
        <dbReference type="ChEBI" id="CHEBI:58359"/>
    </reaction>
</comment>
<comment type="catalytic activity">
    <reaction evidence="1">
        <text>UTP + NH4(+) + ATP = CTP + ADP + phosphate + 2 H(+)</text>
        <dbReference type="Rhea" id="RHEA:16597"/>
        <dbReference type="ChEBI" id="CHEBI:15378"/>
        <dbReference type="ChEBI" id="CHEBI:28938"/>
        <dbReference type="ChEBI" id="CHEBI:30616"/>
        <dbReference type="ChEBI" id="CHEBI:37563"/>
        <dbReference type="ChEBI" id="CHEBI:43474"/>
        <dbReference type="ChEBI" id="CHEBI:46398"/>
        <dbReference type="ChEBI" id="CHEBI:456216"/>
    </reaction>
</comment>
<comment type="activity regulation">
    <text evidence="1">Allosterically activated by GTP, when glutamine is the substrate; GTP has no effect on the reaction when ammonia is the substrate. The allosteric effector GTP functions by stabilizing the protein conformation that binds the tetrahedral intermediate(s) formed during glutamine hydrolysis. Inhibited by the product CTP, via allosteric rather than competitive inhibition.</text>
</comment>
<comment type="pathway">
    <text evidence="1">Pyrimidine metabolism; CTP biosynthesis via de novo pathway; CTP from UDP: step 2/2.</text>
</comment>
<comment type="subunit">
    <text evidence="1">Homotetramer.</text>
</comment>
<comment type="miscellaneous">
    <text evidence="1">CTPSs have evolved a hybrid strategy for distinguishing between UTP and CTP. The overlapping regions of the product feedback inhibitory and substrate sites recognize a common feature in both compounds, the triphosphate moiety. To differentiate isosteric substrate and product pyrimidine rings, an additional pocket far from the expected kinase/ligase catalytic site, specifically recognizes the cytosine and ribose portions of the product inhibitor.</text>
</comment>
<comment type="similarity">
    <text evidence="1">Belongs to the CTP synthase family.</text>
</comment>
<proteinExistence type="inferred from homology"/>
<organism>
    <name type="scientific">Staphylococcus aureus (strain COL)</name>
    <dbReference type="NCBI Taxonomy" id="93062"/>
    <lineage>
        <taxon>Bacteria</taxon>
        <taxon>Bacillati</taxon>
        <taxon>Bacillota</taxon>
        <taxon>Bacilli</taxon>
        <taxon>Bacillales</taxon>
        <taxon>Staphylococcaceae</taxon>
        <taxon>Staphylococcus</taxon>
    </lineage>
</organism>
<sequence length="536" mass="59992">MTKFIFVTGGVVSSLGKGITASSLGRLLKDRGLNVTIQKFDPYLNVDPGTMSPYQHGEVFVTDDGAETDLDLGHYERFIDINLNKFSNVTAGKVYSHVLKKERRGDYLGGTVQVIPHITNEIKERLLLAGESTNADVVITEIGGTTGDIESLPFIEAIRQIRSDLGRENVMYVHCTLLPYIKAAGEMKTKPTQHSVKELRGLGIQPDLIVVRTEYEMTQDLKDKIALFCDINKESVIECRDADSLYEIPLQLSQQNMDDIVIKRLQLNAKYETQLDEWKQLLDIVNNLDGKITIGLVGKYVSLQDAYLSVVESLKHAGYPFAKDIDIRWIDSSEVTDENAAEYLADVDGILVPGGFGFRASEGKISAIKYARENNVPFFGICLGMQLATVEFSRNVLGLEGAHSAELDPATPYPIIDLLPEQKDIEDLGGTLRLGLYPCSIKEGTLAQDVYGKAEIEERHRHRYEFNNDYREQLEANGMVISGTSPDGRLVEMVEIPTNDFFIACQFHPEFLSRPNRPHPIFKSFIEASLKYQQNK</sequence>
<evidence type="ECO:0000255" key="1">
    <source>
        <dbReference type="HAMAP-Rule" id="MF_01227"/>
    </source>
</evidence>